<proteinExistence type="inferred from homology"/>
<name>RIMM_THEMA</name>
<dbReference type="EMBL" id="AE000512">
    <property type="protein sequence ID" value="AAD36635.1"/>
    <property type="molecule type" value="Genomic_DNA"/>
</dbReference>
<dbReference type="PIR" id="A72237">
    <property type="entry name" value="A72237"/>
</dbReference>
<dbReference type="RefSeq" id="NP_229368.1">
    <property type="nucleotide sequence ID" value="NC_000853.1"/>
</dbReference>
<dbReference type="RefSeq" id="WP_004081983.1">
    <property type="nucleotide sequence ID" value="NZ_CP011107.1"/>
</dbReference>
<dbReference type="SMR" id="Q9X1Q4"/>
<dbReference type="FunCoup" id="Q9X1Q4">
    <property type="interactions" value="304"/>
</dbReference>
<dbReference type="STRING" id="243274.TM_1568"/>
<dbReference type="PaxDb" id="243274-THEMA_06440"/>
<dbReference type="EnsemblBacteria" id="AAD36635">
    <property type="protein sequence ID" value="AAD36635"/>
    <property type="gene ID" value="TM_1568"/>
</dbReference>
<dbReference type="KEGG" id="tma:TM1568"/>
<dbReference type="KEGG" id="tmi:THEMA_06440"/>
<dbReference type="KEGG" id="tmm:Tmari_1576"/>
<dbReference type="KEGG" id="tmw:THMA_1603"/>
<dbReference type="eggNOG" id="COG0806">
    <property type="taxonomic scope" value="Bacteria"/>
</dbReference>
<dbReference type="InParanoid" id="Q9X1Q4"/>
<dbReference type="OrthoDB" id="9810331at2"/>
<dbReference type="Proteomes" id="UP000008183">
    <property type="component" value="Chromosome"/>
</dbReference>
<dbReference type="GO" id="GO:0005829">
    <property type="term" value="C:cytosol"/>
    <property type="evidence" value="ECO:0000318"/>
    <property type="project" value="GO_Central"/>
</dbReference>
<dbReference type="GO" id="GO:0005840">
    <property type="term" value="C:ribosome"/>
    <property type="evidence" value="ECO:0007669"/>
    <property type="project" value="InterPro"/>
</dbReference>
<dbReference type="GO" id="GO:0043022">
    <property type="term" value="F:ribosome binding"/>
    <property type="evidence" value="ECO:0007669"/>
    <property type="project" value="InterPro"/>
</dbReference>
<dbReference type="GO" id="GO:0030490">
    <property type="term" value="P:maturation of SSU-rRNA"/>
    <property type="evidence" value="ECO:0000318"/>
    <property type="project" value="GO_Central"/>
</dbReference>
<dbReference type="Gene3D" id="2.30.30.240">
    <property type="entry name" value="PRC-barrel domain"/>
    <property type="match status" value="1"/>
</dbReference>
<dbReference type="Gene3D" id="2.40.30.60">
    <property type="entry name" value="RimM"/>
    <property type="match status" value="1"/>
</dbReference>
<dbReference type="HAMAP" id="MF_00014">
    <property type="entry name" value="Ribosome_mat_RimM"/>
    <property type="match status" value="1"/>
</dbReference>
<dbReference type="InterPro" id="IPR011033">
    <property type="entry name" value="PRC_barrel-like_sf"/>
</dbReference>
<dbReference type="InterPro" id="IPR056792">
    <property type="entry name" value="PRC_RimM"/>
</dbReference>
<dbReference type="InterPro" id="IPR011961">
    <property type="entry name" value="RimM"/>
</dbReference>
<dbReference type="InterPro" id="IPR002676">
    <property type="entry name" value="RimM_N"/>
</dbReference>
<dbReference type="InterPro" id="IPR036976">
    <property type="entry name" value="RimM_N_sf"/>
</dbReference>
<dbReference type="InterPro" id="IPR009000">
    <property type="entry name" value="Transl_B-barrel_sf"/>
</dbReference>
<dbReference type="NCBIfam" id="TIGR02273">
    <property type="entry name" value="16S_RimM"/>
    <property type="match status" value="1"/>
</dbReference>
<dbReference type="PANTHER" id="PTHR33692">
    <property type="entry name" value="RIBOSOME MATURATION FACTOR RIMM"/>
    <property type="match status" value="1"/>
</dbReference>
<dbReference type="PANTHER" id="PTHR33692:SF1">
    <property type="entry name" value="RIBOSOME MATURATION FACTOR RIMM"/>
    <property type="match status" value="1"/>
</dbReference>
<dbReference type="Pfam" id="PF24986">
    <property type="entry name" value="PRC_RimM"/>
    <property type="match status" value="1"/>
</dbReference>
<dbReference type="Pfam" id="PF01782">
    <property type="entry name" value="RimM"/>
    <property type="match status" value="1"/>
</dbReference>
<dbReference type="SUPFAM" id="SSF50346">
    <property type="entry name" value="PRC-barrel domain"/>
    <property type="match status" value="1"/>
</dbReference>
<dbReference type="SUPFAM" id="SSF50447">
    <property type="entry name" value="Translation proteins"/>
    <property type="match status" value="1"/>
</dbReference>
<comment type="function">
    <text evidence="1">An accessory protein needed during the final step in the assembly of 30S ribosomal subunit, possibly for assembly of the head region. Essential for efficient processing of 16S rRNA. May be needed both before and after RbfA during the maturation of 16S rRNA. It has affinity for free ribosomal 30S subunits but not for 70S ribosomes.</text>
</comment>
<comment type="subunit">
    <text evidence="1">Binds ribosomal protein uS19.</text>
</comment>
<comment type="subcellular location">
    <subcellularLocation>
        <location evidence="1">Cytoplasm</location>
    </subcellularLocation>
</comment>
<comment type="domain">
    <text evidence="1">The PRC barrel domain binds ribosomal protein uS19.</text>
</comment>
<comment type="similarity">
    <text evidence="1">Belongs to the RimM family.</text>
</comment>
<feature type="chain" id="PRO_0000163378" description="Ribosome maturation factor RimM">
    <location>
        <begin position="1"/>
        <end position="176"/>
    </location>
</feature>
<feature type="domain" description="PRC barrel" evidence="1">
    <location>
        <begin position="104"/>
        <end position="176"/>
    </location>
</feature>
<accession>Q9X1Q4</accession>
<keyword id="KW-0143">Chaperone</keyword>
<keyword id="KW-0963">Cytoplasm</keyword>
<keyword id="KW-1185">Reference proteome</keyword>
<keyword id="KW-0690">Ribosome biogenesis</keyword>
<keyword id="KW-0698">rRNA processing</keyword>
<protein>
    <recommendedName>
        <fullName evidence="1">Ribosome maturation factor RimM</fullName>
    </recommendedName>
</protein>
<organism>
    <name type="scientific">Thermotoga maritima (strain ATCC 43589 / DSM 3109 / JCM 10099 / NBRC 100826 / MSB8)</name>
    <dbReference type="NCBI Taxonomy" id="243274"/>
    <lineage>
        <taxon>Bacteria</taxon>
        <taxon>Thermotogati</taxon>
        <taxon>Thermotogota</taxon>
        <taxon>Thermotogae</taxon>
        <taxon>Thermotogales</taxon>
        <taxon>Thermotogaceae</taxon>
        <taxon>Thermotoga</taxon>
    </lineage>
</organism>
<gene>
    <name evidence="1" type="primary">rimM</name>
    <name type="ordered locus">TM_1568</name>
</gene>
<evidence type="ECO:0000255" key="1">
    <source>
        <dbReference type="HAMAP-Rule" id="MF_00014"/>
    </source>
</evidence>
<reference key="1">
    <citation type="journal article" date="1999" name="Nature">
        <title>Evidence for lateral gene transfer between Archaea and Bacteria from genome sequence of Thermotoga maritima.</title>
        <authorList>
            <person name="Nelson K.E."/>
            <person name="Clayton R.A."/>
            <person name="Gill S.R."/>
            <person name="Gwinn M.L."/>
            <person name="Dodson R.J."/>
            <person name="Haft D.H."/>
            <person name="Hickey E.K."/>
            <person name="Peterson J.D."/>
            <person name="Nelson W.C."/>
            <person name="Ketchum K.A."/>
            <person name="McDonald L.A."/>
            <person name="Utterback T.R."/>
            <person name="Malek J.A."/>
            <person name="Linher K.D."/>
            <person name="Garrett M.M."/>
            <person name="Stewart A.M."/>
            <person name="Cotton M.D."/>
            <person name="Pratt M.S."/>
            <person name="Phillips C.A."/>
            <person name="Richardson D.L."/>
            <person name="Heidelberg J.F."/>
            <person name="Sutton G.G."/>
            <person name="Fleischmann R.D."/>
            <person name="Eisen J.A."/>
            <person name="White O."/>
            <person name="Salzberg S.L."/>
            <person name="Smith H.O."/>
            <person name="Venter J.C."/>
            <person name="Fraser C.M."/>
        </authorList>
    </citation>
    <scope>NUCLEOTIDE SEQUENCE [LARGE SCALE GENOMIC DNA]</scope>
    <source>
        <strain>ATCC 43589 / DSM 3109 / JCM 10099 / NBRC 100826 / MSB8</strain>
    </source>
</reference>
<sequence length="176" mass="20419">MIRTIQDLLNERVAIGKIVNTHGLKGEVKFFPYTNSEEIVKNLSSVVLYNSEKKAFYNLTVESVRRMNKLFLIRFKSIDTIEAAERIKGCEVFIKYEELPKLSEDEYYFYEILDCDVFYESGENVGKVVDIIETGSNDVLVVRKKKKETLIPMTKDCIVEIDKGAKKIIAKEMEWI</sequence>